<sequence>MEKKDMLYEGKAKKIFRTDDKDTVVVYYKDDATAFNGEKKGTIEDKGVMNNSITAMLFELLEKKGVKTHFIEKINEREQLCKKVEIVPLEVIVRNIAAGSMAKRLGLSEGRKLDTTVFEISYKNDDLNDPLINDYHAVAIGLTTFEELKEMYSIAEKVNNTLKEFFDEQGINLVDFKIEIGRFNGELLLADEISPDTCRLWDKSTGEKLDKDRFRRDMGNVKEAYMEILKRVNK</sequence>
<dbReference type="EC" id="6.3.2.6" evidence="1"/>
<dbReference type="EMBL" id="CP000727">
    <property type="protein sequence ID" value="ABS36003.1"/>
    <property type="molecule type" value="Genomic_DNA"/>
</dbReference>
<dbReference type="EMBL" id="AM412317">
    <property type="protein sequence ID" value="CAL84443.1"/>
    <property type="molecule type" value="Genomic_DNA"/>
</dbReference>
<dbReference type="RefSeq" id="WP_012047943.1">
    <property type="nucleotide sequence ID" value="NC_009698.1"/>
</dbReference>
<dbReference type="RefSeq" id="YP_001255376.1">
    <property type="nucleotide sequence ID" value="NC_009495.1"/>
</dbReference>
<dbReference type="RefSeq" id="YP_001388610.1">
    <property type="nucleotide sequence ID" value="NC_009698.1"/>
</dbReference>
<dbReference type="SMR" id="A5I5W3"/>
<dbReference type="GeneID" id="5185071"/>
<dbReference type="KEGG" id="cbh:CLC_2775"/>
<dbReference type="KEGG" id="cbo:CBO2877"/>
<dbReference type="PATRIC" id="fig|413999.7.peg.2860"/>
<dbReference type="HOGENOM" id="CLU_061495_2_0_9"/>
<dbReference type="UniPathway" id="UPA00074">
    <property type="reaction ID" value="UER00131"/>
</dbReference>
<dbReference type="PRO" id="PR:A5I5W3"/>
<dbReference type="Proteomes" id="UP000001986">
    <property type="component" value="Chromosome"/>
</dbReference>
<dbReference type="GO" id="GO:0005524">
    <property type="term" value="F:ATP binding"/>
    <property type="evidence" value="ECO:0007669"/>
    <property type="project" value="UniProtKB-KW"/>
</dbReference>
<dbReference type="GO" id="GO:0004639">
    <property type="term" value="F:phosphoribosylaminoimidazolesuccinocarboxamide synthase activity"/>
    <property type="evidence" value="ECO:0007669"/>
    <property type="project" value="UniProtKB-UniRule"/>
</dbReference>
<dbReference type="GO" id="GO:0006189">
    <property type="term" value="P:'de novo' IMP biosynthetic process"/>
    <property type="evidence" value="ECO:0007669"/>
    <property type="project" value="UniProtKB-UniRule"/>
</dbReference>
<dbReference type="GO" id="GO:0009236">
    <property type="term" value="P:cobalamin biosynthetic process"/>
    <property type="evidence" value="ECO:0007669"/>
    <property type="project" value="InterPro"/>
</dbReference>
<dbReference type="CDD" id="cd01415">
    <property type="entry name" value="SAICAR_synt_PurC"/>
    <property type="match status" value="1"/>
</dbReference>
<dbReference type="FunFam" id="3.30.200.20:FF:000189">
    <property type="entry name" value="Phosphoribosylaminoimidazole-succinocarboxamide synthase"/>
    <property type="match status" value="1"/>
</dbReference>
<dbReference type="FunFam" id="3.30.470.20:FF:000006">
    <property type="entry name" value="Phosphoribosylaminoimidazole-succinocarboxamide synthase"/>
    <property type="match status" value="1"/>
</dbReference>
<dbReference type="Gene3D" id="3.30.470.20">
    <property type="entry name" value="ATP-grasp fold, B domain"/>
    <property type="match status" value="1"/>
</dbReference>
<dbReference type="Gene3D" id="3.30.200.20">
    <property type="entry name" value="Phosphorylase Kinase, domain 1"/>
    <property type="match status" value="1"/>
</dbReference>
<dbReference type="HAMAP" id="MF_00137">
    <property type="entry name" value="SAICAR_synth"/>
    <property type="match status" value="1"/>
</dbReference>
<dbReference type="InterPro" id="IPR028923">
    <property type="entry name" value="SAICAR_synt/ADE2_N"/>
</dbReference>
<dbReference type="InterPro" id="IPR033934">
    <property type="entry name" value="SAICAR_synt_PurC"/>
</dbReference>
<dbReference type="InterPro" id="IPR001636">
    <property type="entry name" value="SAICAR_synth"/>
</dbReference>
<dbReference type="InterPro" id="IPR050089">
    <property type="entry name" value="SAICAR_synthetase"/>
</dbReference>
<dbReference type="InterPro" id="IPR018236">
    <property type="entry name" value="SAICAR_synthetase_CS"/>
</dbReference>
<dbReference type="NCBIfam" id="TIGR00081">
    <property type="entry name" value="purC"/>
    <property type="match status" value="1"/>
</dbReference>
<dbReference type="PANTHER" id="PTHR43599">
    <property type="entry name" value="MULTIFUNCTIONAL PROTEIN ADE2"/>
    <property type="match status" value="1"/>
</dbReference>
<dbReference type="PANTHER" id="PTHR43599:SF3">
    <property type="entry name" value="SI:DKEY-6E2.2"/>
    <property type="match status" value="1"/>
</dbReference>
<dbReference type="Pfam" id="PF01259">
    <property type="entry name" value="SAICAR_synt"/>
    <property type="match status" value="1"/>
</dbReference>
<dbReference type="SUPFAM" id="SSF56104">
    <property type="entry name" value="SAICAR synthase-like"/>
    <property type="match status" value="1"/>
</dbReference>
<dbReference type="PROSITE" id="PS01057">
    <property type="entry name" value="SAICAR_SYNTHETASE_1"/>
    <property type="match status" value="1"/>
</dbReference>
<dbReference type="PROSITE" id="PS01058">
    <property type="entry name" value="SAICAR_SYNTHETASE_2"/>
    <property type="match status" value="1"/>
</dbReference>
<comment type="catalytic activity">
    <reaction evidence="1">
        <text>5-amino-1-(5-phospho-D-ribosyl)imidazole-4-carboxylate + L-aspartate + ATP = (2S)-2-[5-amino-1-(5-phospho-beta-D-ribosyl)imidazole-4-carboxamido]succinate + ADP + phosphate + 2 H(+)</text>
        <dbReference type="Rhea" id="RHEA:22628"/>
        <dbReference type="ChEBI" id="CHEBI:15378"/>
        <dbReference type="ChEBI" id="CHEBI:29991"/>
        <dbReference type="ChEBI" id="CHEBI:30616"/>
        <dbReference type="ChEBI" id="CHEBI:43474"/>
        <dbReference type="ChEBI" id="CHEBI:58443"/>
        <dbReference type="ChEBI" id="CHEBI:77657"/>
        <dbReference type="ChEBI" id="CHEBI:456216"/>
        <dbReference type="EC" id="6.3.2.6"/>
    </reaction>
</comment>
<comment type="pathway">
    <text evidence="1">Purine metabolism; IMP biosynthesis via de novo pathway; 5-amino-1-(5-phospho-D-ribosyl)imidazole-4-carboxamide from 5-amino-1-(5-phospho-D-ribosyl)imidazole-4-carboxylate: step 1/2.</text>
</comment>
<comment type="similarity">
    <text evidence="1">Belongs to the SAICAR synthetase family.</text>
</comment>
<accession>A5I5W3</accession>
<accession>A7G745</accession>
<proteinExistence type="inferred from homology"/>
<feature type="chain" id="PRO_1000018690" description="Phosphoribosylaminoimidazole-succinocarboxamide synthase">
    <location>
        <begin position="1"/>
        <end position="234"/>
    </location>
</feature>
<organism>
    <name type="scientific">Clostridium botulinum (strain Hall / ATCC 3502 / NCTC 13319 / Type A)</name>
    <dbReference type="NCBI Taxonomy" id="441771"/>
    <lineage>
        <taxon>Bacteria</taxon>
        <taxon>Bacillati</taxon>
        <taxon>Bacillota</taxon>
        <taxon>Clostridia</taxon>
        <taxon>Eubacteriales</taxon>
        <taxon>Clostridiaceae</taxon>
        <taxon>Clostridium</taxon>
    </lineage>
</organism>
<name>PUR7_CLOBH</name>
<gene>
    <name evidence="1" type="primary">purC</name>
    <name type="ordered locus">CBO2877</name>
    <name type="ordered locus">CLC_2775</name>
</gene>
<keyword id="KW-0067">ATP-binding</keyword>
<keyword id="KW-0436">Ligase</keyword>
<keyword id="KW-0547">Nucleotide-binding</keyword>
<keyword id="KW-0658">Purine biosynthesis</keyword>
<keyword id="KW-1185">Reference proteome</keyword>
<reference key="1">
    <citation type="journal article" date="2007" name="Genome Res.">
        <title>Genome sequence of a proteolytic (Group I) Clostridium botulinum strain Hall A and comparative analysis of the clostridial genomes.</title>
        <authorList>
            <person name="Sebaihia M."/>
            <person name="Peck M.W."/>
            <person name="Minton N.P."/>
            <person name="Thomson N.R."/>
            <person name="Holden M.T.G."/>
            <person name="Mitchell W.J."/>
            <person name="Carter A.T."/>
            <person name="Bentley S.D."/>
            <person name="Mason D.R."/>
            <person name="Crossman L."/>
            <person name="Paul C.J."/>
            <person name="Ivens A."/>
            <person name="Wells-Bennik M.H.J."/>
            <person name="Davis I.J."/>
            <person name="Cerdeno-Tarraga A.M."/>
            <person name="Churcher C."/>
            <person name="Quail M.A."/>
            <person name="Chillingworth T."/>
            <person name="Feltwell T."/>
            <person name="Fraser A."/>
            <person name="Goodhead I."/>
            <person name="Hance Z."/>
            <person name="Jagels K."/>
            <person name="Larke N."/>
            <person name="Maddison M."/>
            <person name="Moule S."/>
            <person name="Mungall K."/>
            <person name="Norbertczak H."/>
            <person name="Rabbinowitsch E."/>
            <person name="Sanders M."/>
            <person name="Simmonds M."/>
            <person name="White B."/>
            <person name="Whithead S."/>
            <person name="Parkhill J."/>
        </authorList>
    </citation>
    <scope>NUCLEOTIDE SEQUENCE [LARGE SCALE GENOMIC DNA]</scope>
    <source>
        <strain>Hall / ATCC 3502 / NCTC 13319 / Type A</strain>
    </source>
</reference>
<reference key="2">
    <citation type="journal article" date="2007" name="PLoS ONE">
        <title>Analysis of the neurotoxin complex genes in Clostridium botulinum A1-A4 and B1 strains: BoNT/A3, /Ba4 and /B1 clusters are located within plasmids.</title>
        <authorList>
            <person name="Smith T.J."/>
            <person name="Hill K.K."/>
            <person name="Foley B.T."/>
            <person name="Detter J.C."/>
            <person name="Munk A.C."/>
            <person name="Bruce D.C."/>
            <person name="Doggett N.A."/>
            <person name="Smith L.A."/>
            <person name="Marks J.D."/>
            <person name="Xie G."/>
            <person name="Brettin T.S."/>
        </authorList>
    </citation>
    <scope>NUCLEOTIDE SEQUENCE [LARGE SCALE GENOMIC DNA]</scope>
    <source>
        <strain>Hall / ATCC 3502 / NCTC 13319 / Type A</strain>
    </source>
</reference>
<evidence type="ECO:0000255" key="1">
    <source>
        <dbReference type="HAMAP-Rule" id="MF_00137"/>
    </source>
</evidence>
<protein>
    <recommendedName>
        <fullName evidence="1">Phosphoribosylaminoimidazole-succinocarboxamide synthase</fullName>
        <ecNumber evidence="1">6.3.2.6</ecNumber>
    </recommendedName>
    <alternativeName>
        <fullName evidence="1">SAICAR synthetase</fullName>
    </alternativeName>
</protein>